<accession>P20968</accession>
<sequence>MSYKRGTCLGFIMLLMVSHHHTKGKPLSSLQNLSRLLEDNFERSFGSDEADQQLVPTDSLDQLDPELQWNKNRLEQGDSPHVNEMTLQQLLNDPVGTSRRYRQRNKKGYSRGCFGVKLDRIGAFSGLGC</sequence>
<comment type="function">
    <text evidence="1">Hormone which plays a role in endochondral ossification through regulation of cartilaginous growth plate chondrocytes proliferation and differentiation. May also be vasoactive and natriuretic. May be important for freshwater adaptation (By similarity).</text>
</comment>
<comment type="subcellular location">
    <subcellularLocation>
        <location>Secreted</location>
    </subcellularLocation>
</comment>
<comment type="similarity">
    <text evidence="4">Belongs to the natriuretic peptide family.</text>
</comment>
<feature type="signal peptide" evidence="2">
    <location>
        <begin position="1"/>
        <end position="24"/>
    </location>
</feature>
<feature type="propeptide" id="PRO_0000001573" evidence="3">
    <location>
        <begin position="25"/>
        <end position="107"/>
    </location>
</feature>
<feature type="peptide" id="PRO_0000001574" description="C-type natriuretic peptide 1">
    <location>
        <begin position="108"/>
        <end position="129"/>
    </location>
</feature>
<feature type="disulfide bond">
    <location>
        <begin position="113"/>
        <end position="129"/>
    </location>
</feature>
<name>ANFC_AQUCT</name>
<dbReference type="EMBL" id="D17413">
    <property type="protein sequence ID" value="BAA04235.1"/>
    <property type="molecule type" value="mRNA"/>
</dbReference>
<dbReference type="PIR" id="A36399">
    <property type="entry name" value="A36399"/>
</dbReference>
<dbReference type="PIR" id="A54119">
    <property type="entry name" value="A54119"/>
</dbReference>
<dbReference type="GO" id="GO:0005576">
    <property type="term" value="C:extracellular region"/>
    <property type="evidence" value="ECO:0007669"/>
    <property type="project" value="UniProtKB-SubCell"/>
</dbReference>
<dbReference type="GO" id="GO:0005179">
    <property type="term" value="F:hormone activity"/>
    <property type="evidence" value="ECO:0007669"/>
    <property type="project" value="UniProtKB-KW"/>
</dbReference>
<dbReference type="GO" id="GO:0097746">
    <property type="term" value="P:blood vessel diameter maintenance"/>
    <property type="evidence" value="ECO:0007669"/>
    <property type="project" value="UniProtKB-KW"/>
</dbReference>
<dbReference type="GO" id="GO:0006182">
    <property type="term" value="P:cGMP biosynthetic process"/>
    <property type="evidence" value="ECO:0000250"/>
    <property type="project" value="UniProtKB"/>
</dbReference>
<dbReference type="GO" id="GO:0003418">
    <property type="term" value="P:growth plate cartilage chondrocyte differentiation"/>
    <property type="evidence" value="ECO:0000250"/>
    <property type="project" value="UniProtKB"/>
</dbReference>
<dbReference type="GO" id="GO:0003419">
    <property type="term" value="P:growth plate cartilage chondrocyte proliferation"/>
    <property type="evidence" value="ECO:0000250"/>
    <property type="project" value="UniProtKB"/>
</dbReference>
<dbReference type="GO" id="GO:0007168">
    <property type="term" value="P:receptor guanylyl cyclase signaling pathway"/>
    <property type="evidence" value="ECO:0000250"/>
    <property type="project" value="UniProtKB"/>
</dbReference>
<dbReference type="InterPro" id="IPR002406">
    <property type="entry name" value="C_natriurtcpep"/>
</dbReference>
<dbReference type="InterPro" id="IPR000663">
    <property type="entry name" value="Natr_peptide"/>
</dbReference>
<dbReference type="InterPro" id="IPR030480">
    <property type="entry name" value="Natr_peptide_CS"/>
</dbReference>
<dbReference type="PANTHER" id="PTHR12167">
    <property type="entry name" value="C-TYPE NATRIURETIC PEPTIDE"/>
    <property type="match status" value="1"/>
</dbReference>
<dbReference type="PANTHER" id="PTHR12167:SF5">
    <property type="entry name" value="C-TYPE NATRIURETIC PEPTIDE 3-LIKE PRECURSOR"/>
    <property type="match status" value="1"/>
</dbReference>
<dbReference type="Pfam" id="PF00212">
    <property type="entry name" value="ANP"/>
    <property type="match status" value="1"/>
</dbReference>
<dbReference type="PRINTS" id="PR00713">
    <property type="entry name" value="CNATPEPTIDE"/>
</dbReference>
<dbReference type="PRINTS" id="PR00710">
    <property type="entry name" value="NATPEPTIDES"/>
</dbReference>
<dbReference type="SMART" id="SM00183">
    <property type="entry name" value="NAT_PEP"/>
    <property type="match status" value="1"/>
</dbReference>
<dbReference type="PROSITE" id="PS00263">
    <property type="entry name" value="NATRIURETIC_PEPTIDE"/>
    <property type="match status" value="1"/>
</dbReference>
<proteinExistence type="evidence at protein level"/>
<evidence type="ECO:0000250" key="1"/>
<evidence type="ECO:0000255" key="2"/>
<evidence type="ECO:0000269" key="3">
    <source>
    </source>
</evidence>
<evidence type="ECO:0000305" key="4"/>
<organism>
    <name type="scientific">Aquarana catesbeiana</name>
    <name type="common">American bullfrog</name>
    <name type="synonym">Rana catesbeiana</name>
    <dbReference type="NCBI Taxonomy" id="8400"/>
    <lineage>
        <taxon>Eukaryota</taxon>
        <taxon>Metazoa</taxon>
        <taxon>Chordata</taxon>
        <taxon>Craniata</taxon>
        <taxon>Vertebrata</taxon>
        <taxon>Euteleostomi</taxon>
        <taxon>Amphibia</taxon>
        <taxon>Batrachia</taxon>
        <taxon>Anura</taxon>
        <taxon>Neobatrachia</taxon>
        <taxon>Ranoidea</taxon>
        <taxon>Ranidae</taxon>
        <taxon>Aquarana</taxon>
    </lineage>
</organism>
<reference key="1">
    <citation type="journal article" date="1994" name="J. Biol. Chem.">
        <title>Cloning and characterization of a novel natriuretic peptide in frog (Rana catesbeiana).</title>
        <authorList>
            <person name="Kojima M."/>
            <person name="Ohyama Y."/>
            <person name="Miyamoto K."/>
            <person name="Minamino N."/>
            <person name="Kangawa K."/>
            <person name="Matsuo H."/>
        </authorList>
    </citation>
    <scope>NUCLEOTIDE SEQUENCE [MRNA]</scope>
    <source>
        <tissue>Brain</tissue>
    </source>
</reference>
<reference key="2">
    <citation type="journal article" date="1990" name="Biochem. Biophys. Res. Commun.">
        <title>Isolation and sequence determination of frog C-type natriuretic peptide.</title>
        <authorList>
            <person name="Yoshihara A."/>
            <person name="Kozawa H."/>
            <person name="Minamino N."/>
            <person name="Kangawa K."/>
            <person name="Matsuo H."/>
        </authorList>
    </citation>
    <scope>PROTEIN SEQUENCE OF 108-129</scope>
    <source>
        <tissue>Brain</tissue>
    </source>
</reference>
<keyword id="KW-0165">Cleavage on pair of basic residues</keyword>
<keyword id="KW-0903">Direct protein sequencing</keyword>
<keyword id="KW-1015">Disulfide bond</keyword>
<keyword id="KW-0372">Hormone</keyword>
<keyword id="KW-0964">Secreted</keyword>
<keyword id="KW-0732">Signal</keyword>
<keyword id="KW-0838">Vasoactive</keyword>
<protein>
    <recommendedName>
        <fullName>C-type natriuretic peptide 1</fullName>
        <shortName>CNP I</shortName>
    </recommendedName>
</protein>